<reference key="1">
    <citation type="submission" date="2006-08" db="EMBL/GenBank/DDBJ databases">
        <title>Complete sequence of chromosome 1 of Shewanella sp. MR-7.</title>
        <authorList>
            <person name="Copeland A."/>
            <person name="Lucas S."/>
            <person name="Lapidus A."/>
            <person name="Barry K."/>
            <person name="Detter J.C."/>
            <person name="Glavina del Rio T."/>
            <person name="Hammon N."/>
            <person name="Israni S."/>
            <person name="Dalin E."/>
            <person name="Tice H."/>
            <person name="Pitluck S."/>
            <person name="Kiss H."/>
            <person name="Brettin T."/>
            <person name="Bruce D."/>
            <person name="Han C."/>
            <person name="Tapia R."/>
            <person name="Gilna P."/>
            <person name="Schmutz J."/>
            <person name="Larimer F."/>
            <person name="Land M."/>
            <person name="Hauser L."/>
            <person name="Kyrpides N."/>
            <person name="Mikhailova N."/>
            <person name="Nealson K."/>
            <person name="Konstantinidis K."/>
            <person name="Klappenbach J."/>
            <person name="Tiedje J."/>
            <person name="Richardson P."/>
        </authorList>
    </citation>
    <scope>NUCLEOTIDE SEQUENCE [LARGE SCALE GENOMIC DNA]</scope>
    <source>
        <strain>MR-7</strain>
    </source>
</reference>
<accession>Q0HS09</accession>
<comment type="function">
    <text evidence="1">Together with LptE, is involved in the assembly of lipopolysaccharide (LPS) at the surface of the outer membrane.</text>
</comment>
<comment type="subunit">
    <text evidence="1">Component of the lipopolysaccharide transport and assembly complex. Interacts with LptE and LptA.</text>
</comment>
<comment type="subcellular location">
    <subcellularLocation>
        <location evidence="1">Cell outer membrane</location>
    </subcellularLocation>
</comment>
<comment type="similarity">
    <text evidence="1">Belongs to the LptD family.</text>
</comment>
<protein>
    <recommendedName>
        <fullName evidence="1">LPS-assembly protein LptD</fullName>
    </recommendedName>
</protein>
<keyword id="KW-0998">Cell outer membrane</keyword>
<keyword id="KW-0472">Membrane</keyword>
<keyword id="KW-0732">Signal</keyword>
<sequence>MQIRYFLALSLLPQLVLADESPTASASQCVIEPPVPRIVSQPGLSAADQEKIRIVSDRSNAEMGKQAIFTGDVVFSQGDRHIAADEAILDQATEQFDANGNLVFQDNIFTVTADSLQAQMRSNRATLKGAQYWLHGQQVHGDAEKLQITMNNNLILTNTNFTTCPPDNVSWLLEAEKIKINSEEEWGEIWNAKLRIADIPVFYIPYMTVPVSDKRKTGFLYPSFSTSTTNGFEVSAPYYWNIAPEYDLTFTPNYMSSRGLFTKTEFRYLAGEAQSGRLNLEYLGNDQMLSGSPNRYLYNWQHQGAIDKNWRVLANFTEVSDNNYFNDLKSDVNRATDNQLSRIGEVSYFERNWDISTRVQDIKVLGEDEKPYQVMPQVNFNYRAADFWNNLDFGFNSELTNFAHDDSDMNTATRLHMAPSLTLPIHGPSGSLTSQVKLMQTNYWQEQNNSAFDGLDDTVSRTIPQVRINGQINFERFTELFDQNYRQTLEPQFQYLYVGYEDQRGIGIYDTAQLQDDYFGLFRDRRFSGLDRIADANQVTLGVTTRFFDDHNQEATKFSLGQILYLQDSKLGYEDNLFEQNQSTSVLAAELDTRLSHDWYLGAAIQYDTNSSNNKKTEVTLDFRPEANKLLQLSYRYVPDLLNSNTNDLVNISQAGVRGAWPINDSLYFVGNWYYDLNESRSIETYTGFQYESCCYAIRLSYHYRIKTNYDDNIGSAVIDEREQFESGVYLNLVIKGLGGSGPLGVSDMLNDGLFNYRKPLYLRN</sequence>
<organism>
    <name type="scientific">Shewanella sp. (strain MR-7)</name>
    <dbReference type="NCBI Taxonomy" id="60481"/>
    <lineage>
        <taxon>Bacteria</taxon>
        <taxon>Pseudomonadati</taxon>
        <taxon>Pseudomonadota</taxon>
        <taxon>Gammaproteobacteria</taxon>
        <taxon>Alteromonadales</taxon>
        <taxon>Shewanellaceae</taxon>
        <taxon>Shewanella</taxon>
    </lineage>
</organism>
<evidence type="ECO:0000255" key="1">
    <source>
        <dbReference type="HAMAP-Rule" id="MF_01411"/>
    </source>
</evidence>
<gene>
    <name evidence="1" type="primary">lptD</name>
    <name type="synonym">imp</name>
    <name type="synonym">ostA</name>
    <name type="ordered locus">Shewmr7_3112</name>
</gene>
<name>LPTD_SHESR</name>
<proteinExistence type="inferred from homology"/>
<dbReference type="EMBL" id="CP000444">
    <property type="protein sequence ID" value="ABI44096.1"/>
    <property type="molecule type" value="Genomic_DNA"/>
</dbReference>
<dbReference type="SMR" id="Q0HS09"/>
<dbReference type="KEGG" id="shm:Shewmr7_3112"/>
<dbReference type="HOGENOM" id="CLU_009039_2_0_6"/>
<dbReference type="GO" id="GO:0009279">
    <property type="term" value="C:cell outer membrane"/>
    <property type="evidence" value="ECO:0007669"/>
    <property type="project" value="UniProtKB-SubCell"/>
</dbReference>
<dbReference type="GO" id="GO:1990351">
    <property type="term" value="C:transporter complex"/>
    <property type="evidence" value="ECO:0007669"/>
    <property type="project" value="TreeGrafter"/>
</dbReference>
<dbReference type="GO" id="GO:0043165">
    <property type="term" value="P:Gram-negative-bacterium-type cell outer membrane assembly"/>
    <property type="evidence" value="ECO:0007669"/>
    <property type="project" value="UniProtKB-UniRule"/>
</dbReference>
<dbReference type="GO" id="GO:0015920">
    <property type="term" value="P:lipopolysaccharide transport"/>
    <property type="evidence" value="ECO:0007669"/>
    <property type="project" value="InterPro"/>
</dbReference>
<dbReference type="Gene3D" id="2.60.450.10">
    <property type="entry name" value="Lipopolysaccharide (LPS) transport protein A like domain"/>
    <property type="match status" value="1"/>
</dbReference>
<dbReference type="HAMAP" id="MF_01411">
    <property type="entry name" value="LPS_assembly_LptD"/>
    <property type="match status" value="1"/>
</dbReference>
<dbReference type="InterPro" id="IPR020889">
    <property type="entry name" value="LipoPS_assembly_LptD"/>
</dbReference>
<dbReference type="InterPro" id="IPR050218">
    <property type="entry name" value="LptD"/>
</dbReference>
<dbReference type="InterPro" id="IPR007543">
    <property type="entry name" value="LptD_C"/>
</dbReference>
<dbReference type="InterPro" id="IPR005653">
    <property type="entry name" value="OstA-like_N"/>
</dbReference>
<dbReference type="NCBIfam" id="NF002997">
    <property type="entry name" value="PRK03761.1"/>
    <property type="match status" value="1"/>
</dbReference>
<dbReference type="PANTHER" id="PTHR30189">
    <property type="entry name" value="LPS-ASSEMBLY PROTEIN"/>
    <property type="match status" value="1"/>
</dbReference>
<dbReference type="PANTHER" id="PTHR30189:SF1">
    <property type="entry name" value="LPS-ASSEMBLY PROTEIN LPTD"/>
    <property type="match status" value="1"/>
</dbReference>
<dbReference type="Pfam" id="PF04453">
    <property type="entry name" value="LptD"/>
    <property type="match status" value="1"/>
</dbReference>
<dbReference type="Pfam" id="PF03968">
    <property type="entry name" value="LptD_N"/>
    <property type="match status" value="1"/>
</dbReference>
<feature type="signal peptide" evidence="1">
    <location>
        <begin position="1"/>
        <end position="18"/>
    </location>
</feature>
<feature type="chain" id="PRO_5000129121" description="LPS-assembly protein LptD">
    <location>
        <begin position="19"/>
        <end position="765"/>
    </location>
</feature>